<protein>
    <recommendedName>
        <fullName evidence="1">Undecaprenyl-diphosphatase 3</fullName>
        <ecNumber evidence="1">3.6.1.27</ecNumber>
    </recommendedName>
    <alternativeName>
        <fullName evidence="1">Bacitracin resistance protein 3</fullName>
    </alternativeName>
    <alternativeName>
        <fullName evidence="1">Undecaprenyl pyrophosphate phosphatase 3</fullName>
    </alternativeName>
</protein>
<sequence>MNVLEAVFLGAVEGLTEFLPVSSTGHLTILEKLLGHDIDDPDITAFTAIIQVGAVFATLLYFRHDFRRLLAAWGRGVRDPAWREHPDYRFGWAVILGSIPIGLVGVAFKDQIETTLRSLWFVGGALILWSGVMGYADHVGTQKRHEEDVTWKDTLVIGIVQCMALIPGISRSGATMSAGLLRGLDRVAVTRLSFFLSIPALMAAAALQVLTKSDDIADGVGWPATIIATVVSFAVAYVAIAWLLKFIARHSYSVFIGYRLALGATVLFLVATGIVSAT</sequence>
<proteinExistence type="inferred from homology"/>
<name>UPPP3_FRACC</name>
<comment type="function">
    <text evidence="1">Catalyzes the dephosphorylation of undecaprenyl diphosphate (UPP). Confers resistance to bacitracin.</text>
</comment>
<comment type="catalytic activity">
    <reaction evidence="1">
        <text>di-trans,octa-cis-undecaprenyl diphosphate + H2O = di-trans,octa-cis-undecaprenyl phosphate + phosphate + H(+)</text>
        <dbReference type="Rhea" id="RHEA:28094"/>
        <dbReference type="ChEBI" id="CHEBI:15377"/>
        <dbReference type="ChEBI" id="CHEBI:15378"/>
        <dbReference type="ChEBI" id="CHEBI:43474"/>
        <dbReference type="ChEBI" id="CHEBI:58405"/>
        <dbReference type="ChEBI" id="CHEBI:60392"/>
        <dbReference type="EC" id="3.6.1.27"/>
    </reaction>
</comment>
<comment type="subcellular location">
    <subcellularLocation>
        <location evidence="1">Cell membrane</location>
        <topology evidence="1">Multi-pass membrane protein</topology>
    </subcellularLocation>
</comment>
<comment type="miscellaneous">
    <text>Bacitracin is thought to be involved in the inhibition of peptidoglycan synthesis by sequestering undecaprenyl diphosphate, thereby reducing the pool of lipid carrier available.</text>
</comment>
<comment type="similarity">
    <text evidence="1">Belongs to the UppP family.</text>
</comment>
<evidence type="ECO:0000255" key="1">
    <source>
        <dbReference type="HAMAP-Rule" id="MF_01006"/>
    </source>
</evidence>
<gene>
    <name evidence="1" type="primary">uppP3</name>
    <name type="ordered locus">Francci3_4459</name>
</gene>
<organism>
    <name type="scientific">Frankia casuarinae (strain DSM 45818 / CECT 9043 / HFP020203 / CcI3)</name>
    <dbReference type="NCBI Taxonomy" id="106370"/>
    <lineage>
        <taxon>Bacteria</taxon>
        <taxon>Bacillati</taxon>
        <taxon>Actinomycetota</taxon>
        <taxon>Actinomycetes</taxon>
        <taxon>Frankiales</taxon>
        <taxon>Frankiaceae</taxon>
        <taxon>Frankia</taxon>
    </lineage>
</organism>
<feature type="chain" id="PRO_0000250237" description="Undecaprenyl-diphosphatase 3">
    <location>
        <begin position="1"/>
        <end position="278"/>
    </location>
</feature>
<feature type="transmembrane region" description="Helical" evidence="1">
    <location>
        <begin position="42"/>
        <end position="62"/>
    </location>
</feature>
<feature type="transmembrane region" description="Helical" evidence="1">
    <location>
        <begin position="88"/>
        <end position="108"/>
    </location>
</feature>
<feature type="transmembrane region" description="Helical" evidence="1">
    <location>
        <begin position="119"/>
        <end position="139"/>
    </location>
</feature>
<feature type="transmembrane region" description="Helical" evidence="1">
    <location>
        <begin position="187"/>
        <end position="207"/>
    </location>
</feature>
<feature type="transmembrane region" description="Helical" evidence="1">
    <location>
        <begin position="224"/>
        <end position="244"/>
    </location>
</feature>
<feature type="transmembrane region" description="Helical" evidence="1">
    <location>
        <begin position="254"/>
        <end position="274"/>
    </location>
</feature>
<keyword id="KW-0046">Antibiotic resistance</keyword>
<keyword id="KW-1003">Cell membrane</keyword>
<keyword id="KW-0133">Cell shape</keyword>
<keyword id="KW-0961">Cell wall biogenesis/degradation</keyword>
<keyword id="KW-0378">Hydrolase</keyword>
<keyword id="KW-0472">Membrane</keyword>
<keyword id="KW-0573">Peptidoglycan synthesis</keyword>
<keyword id="KW-1185">Reference proteome</keyword>
<keyword id="KW-0812">Transmembrane</keyword>
<keyword id="KW-1133">Transmembrane helix</keyword>
<accession>Q2J4I7</accession>
<dbReference type="EC" id="3.6.1.27" evidence="1"/>
<dbReference type="EMBL" id="CP000249">
    <property type="protein sequence ID" value="ABD13805.1"/>
    <property type="molecule type" value="Genomic_DNA"/>
</dbReference>
<dbReference type="RefSeq" id="WP_011438813.1">
    <property type="nucleotide sequence ID" value="NZ_MSEA01000197.1"/>
</dbReference>
<dbReference type="SMR" id="Q2J4I7"/>
<dbReference type="STRING" id="106370.Francci3_4459"/>
<dbReference type="KEGG" id="fra:Francci3_4459"/>
<dbReference type="eggNOG" id="COG1968">
    <property type="taxonomic scope" value="Bacteria"/>
</dbReference>
<dbReference type="HOGENOM" id="CLU_060296_1_0_11"/>
<dbReference type="OrthoDB" id="9808289at2"/>
<dbReference type="PhylomeDB" id="Q2J4I7"/>
<dbReference type="Proteomes" id="UP000001937">
    <property type="component" value="Chromosome"/>
</dbReference>
<dbReference type="GO" id="GO:0005886">
    <property type="term" value="C:plasma membrane"/>
    <property type="evidence" value="ECO:0007669"/>
    <property type="project" value="UniProtKB-SubCell"/>
</dbReference>
<dbReference type="GO" id="GO:0050380">
    <property type="term" value="F:undecaprenyl-diphosphatase activity"/>
    <property type="evidence" value="ECO:0007669"/>
    <property type="project" value="UniProtKB-UniRule"/>
</dbReference>
<dbReference type="GO" id="GO:0071555">
    <property type="term" value="P:cell wall organization"/>
    <property type="evidence" value="ECO:0007669"/>
    <property type="project" value="UniProtKB-KW"/>
</dbReference>
<dbReference type="GO" id="GO:0009252">
    <property type="term" value="P:peptidoglycan biosynthetic process"/>
    <property type="evidence" value="ECO:0007669"/>
    <property type="project" value="UniProtKB-KW"/>
</dbReference>
<dbReference type="GO" id="GO:0008360">
    <property type="term" value="P:regulation of cell shape"/>
    <property type="evidence" value="ECO:0007669"/>
    <property type="project" value="UniProtKB-KW"/>
</dbReference>
<dbReference type="GO" id="GO:0046677">
    <property type="term" value="P:response to antibiotic"/>
    <property type="evidence" value="ECO:0007669"/>
    <property type="project" value="UniProtKB-UniRule"/>
</dbReference>
<dbReference type="HAMAP" id="MF_01006">
    <property type="entry name" value="Undec_diphosphatase"/>
    <property type="match status" value="1"/>
</dbReference>
<dbReference type="InterPro" id="IPR003824">
    <property type="entry name" value="UppP"/>
</dbReference>
<dbReference type="NCBIfam" id="NF001392">
    <property type="entry name" value="PRK00281.2-1"/>
    <property type="match status" value="1"/>
</dbReference>
<dbReference type="NCBIfam" id="TIGR00753">
    <property type="entry name" value="undec_PP_bacA"/>
    <property type="match status" value="1"/>
</dbReference>
<dbReference type="PANTHER" id="PTHR30622">
    <property type="entry name" value="UNDECAPRENYL-DIPHOSPHATASE"/>
    <property type="match status" value="1"/>
</dbReference>
<dbReference type="PANTHER" id="PTHR30622:SF3">
    <property type="entry name" value="UNDECAPRENYL-DIPHOSPHATASE"/>
    <property type="match status" value="1"/>
</dbReference>
<dbReference type="Pfam" id="PF02673">
    <property type="entry name" value="BacA"/>
    <property type="match status" value="1"/>
</dbReference>
<reference key="1">
    <citation type="journal article" date="2007" name="Genome Res.">
        <title>Genome characteristics of facultatively symbiotic Frankia sp. strains reflect host range and host plant biogeography.</title>
        <authorList>
            <person name="Normand P."/>
            <person name="Lapierre P."/>
            <person name="Tisa L.S."/>
            <person name="Gogarten J.P."/>
            <person name="Alloisio N."/>
            <person name="Bagnarol E."/>
            <person name="Bassi C.A."/>
            <person name="Berry A.M."/>
            <person name="Bickhart D.M."/>
            <person name="Choisne N."/>
            <person name="Couloux A."/>
            <person name="Cournoyer B."/>
            <person name="Cruveiller S."/>
            <person name="Daubin V."/>
            <person name="Demange N."/>
            <person name="Francino M.P."/>
            <person name="Goltsman E."/>
            <person name="Huang Y."/>
            <person name="Kopp O.R."/>
            <person name="Labarre L."/>
            <person name="Lapidus A."/>
            <person name="Lavire C."/>
            <person name="Marechal J."/>
            <person name="Martinez M."/>
            <person name="Mastronunzio J.E."/>
            <person name="Mullin B.C."/>
            <person name="Niemann J."/>
            <person name="Pujic P."/>
            <person name="Rawnsley T."/>
            <person name="Rouy Z."/>
            <person name="Schenowitz C."/>
            <person name="Sellstedt A."/>
            <person name="Tavares F."/>
            <person name="Tomkins J.P."/>
            <person name="Vallenet D."/>
            <person name="Valverde C."/>
            <person name="Wall L.G."/>
            <person name="Wang Y."/>
            <person name="Medigue C."/>
            <person name="Benson D.R."/>
        </authorList>
    </citation>
    <scope>NUCLEOTIDE SEQUENCE [LARGE SCALE GENOMIC DNA]</scope>
    <source>
        <strain>DSM 45818 / CECT 9043 / HFP020203 / CcI3</strain>
    </source>
</reference>